<sequence>MTNIHPTAIVEDGARIGNNVTIEPYAIVKKSVTLCDDVVVKSYAYIDGFTTIGRGTTVWPSAMIGNKPQDLKFKGEKTFVEIGEHCEIREFAMITSSTFEGTTVSIGNNCLIMPWAHIAHNCSVGNNVVFSTHVQLAGHVQVGDCVTIGSMVGVHQFVRIGSYSMVGAMSGIRRDIPPFTIGTGNPYALGGINKVGLQRRQVSFETRLALIKTFKRVFRSDESFQASLESVLEDFGEVPEVRHFVEFCRQPSKRGIERGVDCEASLEEPIDKKEGAFVES</sequence>
<gene>
    <name evidence="1" type="primary">lpxA</name>
    <name type="ordered locus">CTLon_0788</name>
</gene>
<comment type="function">
    <text evidence="1">Involved in the biosynthesis of lipid A, a phosphorylated glycolipid that anchors the lipopolysaccharide to the outer membrane of the cell.</text>
</comment>
<comment type="catalytic activity">
    <reaction evidence="1">
        <text>a (3R)-hydroxyacyl-[ACP] + UDP-N-acetyl-alpha-D-glucosamine = a UDP-3-O-[(3R)-3-hydroxyacyl]-N-acetyl-alpha-D-glucosamine + holo-[ACP]</text>
        <dbReference type="Rhea" id="RHEA:67812"/>
        <dbReference type="Rhea" id="RHEA-COMP:9685"/>
        <dbReference type="Rhea" id="RHEA-COMP:9945"/>
        <dbReference type="ChEBI" id="CHEBI:57705"/>
        <dbReference type="ChEBI" id="CHEBI:64479"/>
        <dbReference type="ChEBI" id="CHEBI:78827"/>
        <dbReference type="ChEBI" id="CHEBI:173225"/>
        <dbReference type="EC" id="2.3.1.129"/>
    </reaction>
</comment>
<comment type="pathway">
    <text evidence="1">Glycolipid biosynthesis; lipid IV(A) biosynthesis; lipid IV(A) from (3R)-3-hydroxytetradecanoyl-[acyl-carrier-protein] and UDP-N-acetyl-alpha-D-glucosamine: step 1/6.</text>
</comment>
<comment type="subunit">
    <text evidence="1">Homotrimer.</text>
</comment>
<comment type="subcellular location">
    <subcellularLocation>
        <location evidence="1">Cytoplasm</location>
    </subcellularLocation>
</comment>
<comment type="similarity">
    <text evidence="1">Belongs to the transferase hexapeptide repeat family. LpxA subfamily.</text>
</comment>
<reference key="1">
    <citation type="journal article" date="2008" name="Genome Res.">
        <title>Chlamydia trachomatis: genome sequence analysis of lymphogranuloma venereum isolates.</title>
        <authorList>
            <person name="Thomson N.R."/>
            <person name="Holden M.T.G."/>
            <person name="Carder C."/>
            <person name="Lennard N."/>
            <person name="Lockey S.J."/>
            <person name="Marsh P."/>
            <person name="Skipp P."/>
            <person name="O'Connor C.D."/>
            <person name="Goodhead I."/>
            <person name="Norbertzcak H."/>
            <person name="Harris B."/>
            <person name="Ormond D."/>
            <person name="Rance R."/>
            <person name="Quail M.A."/>
            <person name="Parkhill J."/>
            <person name="Stephens R.S."/>
            <person name="Clarke I.N."/>
        </authorList>
    </citation>
    <scope>NUCLEOTIDE SEQUENCE [LARGE SCALE GENOMIC DNA]</scope>
    <source>
        <strain>UCH-1/proctitis</strain>
    </source>
</reference>
<accession>B0B9Y4</accession>
<organism>
    <name type="scientific">Chlamydia trachomatis serovar L2b (strain UCH-1/proctitis)</name>
    <dbReference type="NCBI Taxonomy" id="471473"/>
    <lineage>
        <taxon>Bacteria</taxon>
        <taxon>Pseudomonadati</taxon>
        <taxon>Chlamydiota</taxon>
        <taxon>Chlamydiia</taxon>
        <taxon>Chlamydiales</taxon>
        <taxon>Chlamydiaceae</taxon>
        <taxon>Chlamydia/Chlamydophila group</taxon>
        <taxon>Chlamydia</taxon>
    </lineage>
</organism>
<proteinExistence type="inferred from homology"/>
<dbReference type="EC" id="2.3.1.129" evidence="1"/>
<dbReference type="EMBL" id="AM884177">
    <property type="protein sequence ID" value="CAP07185.1"/>
    <property type="molecule type" value="Genomic_DNA"/>
</dbReference>
<dbReference type="RefSeq" id="WP_009873878.1">
    <property type="nucleotide sequence ID" value="NC_010280.2"/>
</dbReference>
<dbReference type="SMR" id="B0B9Y4"/>
<dbReference type="KEGG" id="ctl:CTLon_0788"/>
<dbReference type="HOGENOM" id="CLU_061249_0_0_0"/>
<dbReference type="UniPathway" id="UPA00359">
    <property type="reaction ID" value="UER00477"/>
</dbReference>
<dbReference type="Proteomes" id="UP001154401">
    <property type="component" value="Chromosome"/>
</dbReference>
<dbReference type="GO" id="GO:0005737">
    <property type="term" value="C:cytoplasm"/>
    <property type="evidence" value="ECO:0007669"/>
    <property type="project" value="UniProtKB-SubCell"/>
</dbReference>
<dbReference type="GO" id="GO:0016020">
    <property type="term" value="C:membrane"/>
    <property type="evidence" value="ECO:0007669"/>
    <property type="project" value="GOC"/>
</dbReference>
<dbReference type="GO" id="GO:0008780">
    <property type="term" value="F:acyl-[acyl-carrier-protein]-UDP-N-acetylglucosamine O-acyltransferase activity"/>
    <property type="evidence" value="ECO:0007669"/>
    <property type="project" value="UniProtKB-UniRule"/>
</dbReference>
<dbReference type="GO" id="GO:0009245">
    <property type="term" value="P:lipid A biosynthetic process"/>
    <property type="evidence" value="ECO:0007669"/>
    <property type="project" value="UniProtKB-UniRule"/>
</dbReference>
<dbReference type="CDD" id="cd03351">
    <property type="entry name" value="LbH_UDP-GlcNAc_AT"/>
    <property type="match status" value="1"/>
</dbReference>
<dbReference type="Gene3D" id="2.160.10.10">
    <property type="entry name" value="Hexapeptide repeat proteins"/>
    <property type="match status" value="1"/>
</dbReference>
<dbReference type="Gene3D" id="1.20.1180.10">
    <property type="entry name" value="Udp N-acetylglucosamine O-acyltransferase, C-terminal domain"/>
    <property type="match status" value="1"/>
</dbReference>
<dbReference type="HAMAP" id="MF_00387">
    <property type="entry name" value="LpxA"/>
    <property type="match status" value="1"/>
</dbReference>
<dbReference type="InterPro" id="IPR029098">
    <property type="entry name" value="Acetyltransf_C"/>
</dbReference>
<dbReference type="InterPro" id="IPR037157">
    <property type="entry name" value="Acetyltransf_C_sf"/>
</dbReference>
<dbReference type="InterPro" id="IPR001451">
    <property type="entry name" value="Hexapep"/>
</dbReference>
<dbReference type="InterPro" id="IPR018357">
    <property type="entry name" value="Hexapep_transf_CS"/>
</dbReference>
<dbReference type="InterPro" id="IPR010137">
    <property type="entry name" value="Lipid_A_LpxA"/>
</dbReference>
<dbReference type="InterPro" id="IPR011004">
    <property type="entry name" value="Trimer_LpxA-like_sf"/>
</dbReference>
<dbReference type="NCBIfam" id="TIGR01852">
    <property type="entry name" value="lipid_A_lpxA"/>
    <property type="match status" value="1"/>
</dbReference>
<dbReference type="NCBIfam" id="NF003657">
    <property type="entry name" value="PRK05289.1"/>
    <property type="match status" value="1"/>
</dbReference>
<dbReference type="PANTHER" id="PTHR43480">
    <property type="entry name" value="ACYL-[ACYL-CARRIER-PROTEIN]--UDP-N-ACETYLGLUCOSAMINE O-ACYLTRANSFERASE"/>
    <property type="match status" value="1"/>
</dbReference>
<dbReference type="PANTHER" id="PTHR43480:SF1">
    <property type="entry name" value="ACYL-[ACYL-CARRIER-PROTEIN]--UDP-N-ACETYLGLUCOSAMINE O-ACYLTRANSFERASE, MITOCHONDRIAL-RELATED"/>
    <property type="match status" value="1"/>
</dbReference>
<dbReference type="Pfam" id="PF13720">
    <property type="entry name" value="Acetyltransf_11"/>
    <property type="match status" value="1"/>
</dbReference>
<dbReference type="Pfam" id="PF00132">
    <property type="entry name" value="Hexapep"/>
    <property type="match status" value="1"/>
</dbReference>
<dbReference type="PIRSF" id="PIRSF000456">
    <property type="entry name" value="UDP-GlcNAc_acltr"/>
    <property type="match status" value="1"/>
</dbReference>
<dbReference type="SUPFAM" id="SSF51161">
    <property type="entry name" value="Trimeric LpxA-like enzymes"/>
    <property type="match status" value="1"/>
</dbReference>
<dbReference type="PROSITE" id="PS00101">
    <property type="entry name" value="HEXAPEP_TRANSFERASES"/>
    <property type="match status" value="1"/>
</dbReference>
<name>LPXA_CHLTB</name>
<keyword id="KW-0012">Acyltransferase</keyword>
<keyword id="KW-0963">Cytoplasm</keyword>
<keyword id="KW-0441">Lipid A biosynthesis</keyword>
<keyword id="KW-0444">Lipid biosynthesis</keyword>
<keyword id="KW-0443">Lipid metabolism</keyword>
<keyword id="KW-0677">Repeat</keyword>
<keyword id="KW-0808">Transferase</keyword>
<evidence type="ECO:0000255" key="1">
    <source>
        <dbReference type="HAMAP-Rule" id="MF_00387"/>
    </source>
</evidence>
<feature type="chain" id="PRO_1000122696" description="Acyl-[acyl-carrier-protein]--UDP-N-acetylglucosamine O-acyltransferase">
    <location>
        <begin position="1"/>
        <end position="280"/>
    </location>
</feature>
<protein>
    <recommendedName>
        <fullName evidence="1">Acyl-[acyl-carrier-protein]--UDP-N-acetylglucosamine O-acyltransferase</fullName>
        <shortName evidence="1">UDP-N-acetylglucosamine acyltransferase</shortName>
        <ecNumber evidence="1">2.3.1.129</ecNumber>
    </recommendedName>
</protein>